<comment type="function">
    <text evidence="2">Involved in base excision repair of DNA damaged by oxidation or by mutagenic agents. Acts as a DNA glycosylase that recognizes and removes damaged bases. Has a preference for oxidized purines, such as 7,8-dihydro-8-oxoguanine (8-oxoG). Has AP (apurinic/apyrimidinic) lyase activity and introduces nicks in the DNA strand. Cleaves the DNA backbone by beta-delta elimination to generate a single-strand break at the site of the removed base with both 3'- and 5'-phosphates.</text>
</comment>
<comment type="catalytic activity">
    <reaction evidence="2">
        <text>Hydrolysis of DNA containing ring-opened 7-methylguanine residues, releasing 2,6-diamino-4-hydroxy-5-(N-methyl)formamidopyrimidine.</text>
        <dbReference type="EC" id="3.2.2.23"/>
    </reaction>
</comment>
<comment type="catalytic activity">
    <reaction evidence="2">
        <text>2'-deoxyribonucleotide-(2'-deoxyribose 5'-phosphate)-2'-deoxyribonucleotide-DNA = a 3'-end 2'-deoxyribonucleotide-(2,3-dehydro-2,3-deoxyribose 5'-phosphate)-DNA + a 5'-end 5'-phospho-2'-deoxyribonucleoside-DNA + H(+)</text>
        <dbReference type="Rhea" id="RHEA:66592"/>
        <dbReference type="Rhea" id="RHEA-COMP:13180"/>
        <dbReference type="Rhea" id="RHEA-COMP:16897"/>
        <dbReference type="Rhea" id="RHEA-COMP:17067"/>
        <dbReference type="ChEBI" id="CHEBI:15378"/>
        <dbReference type="ChEBI" id="CHEBI:136412"/>
        <dbReference type="ChEBI" id="CHEBI:157695"/>
        <dbReference type="ChEBI" id="CHEBI:167181"/>
        <dbReference type="EC" id="4.2.99.18"/>
    </reaction>
</comment>
<comment type="cofactor">
    <cofactor evidence="2">
        <name>Zn(2+)</name>
        <dbReference type="ChEBI" id="CHEBI:29105"/>
    </cofactor>
    <text evidence="2">Binds 1 zinc ion per subunit.</text>
</comment>
<comment type="subunit">
    <text evidence="2">Monomer.</text>
</comment>
<comment type="similarity">
    <text evidence="2">Belongs to the FPG family.</text>
</comment>
<protein>
    <recommendedName>
        <fullName evidence="2">Formamidopyrimidine-DNA glycosylase</fullName>
        <shortName evidence="2">Fapy-DNA glycosylase</shortName>
        <ecNumber evidence="2">3.2.2.23</ecNumber>
    </recommendedName>
    <alternativeName>
        <fullName evidence="2">DNA-(apurinic or apyrimidinic site) lyase MutM</fullName>
        <shortName evidence="2">AP lyase MutM</shortName>
        <ecNumber evidence="2">4.2.99.18</ecNumber>
    </alternativeName>
</protein>
<sequence length="274" mass="30892">MPELPEVETVRRGLNRLVSGATIASIEVFWPKIINNDVDSFKQRLANQTIQTIDRRGKYLLFRFSNGLTMVSHLRMEGKYNVVPRGEDQGKHTHVIFHLTDDRDLLYNDTRKFGRMTLVPTGEENTVAGLRTIGPEPVAEQLTLAYMTATFGKSKKMIKPLLLDQSKIAGIGNIYADETLWMSKIHPMRPANSLTTDEIATLRQNIIDEMAMAIKGHGTTVHSFSTAFGEAGQFQNHLHVYGREGEPCERCGTIIEKIKVAQRGTHFCPLEQRL</sequence>
<dbReference type="EC" id="3.2.2.23" evidence="2"/>
<dbReference type="EC" id="4.2.99.18" evidence="2"/>
<dbReference type="EMBL" id="AL935263">
    <property type="protein sequence ID" value="CCC78835.1"/>
    <property type="molecule type" value="Genomic_DNA"/>
</dbReference>
<dbReference type="RefSeq" id="WP_003640272.1">
    <property type="nucleotide sequence ID" value="NC_004567.2"/>
</dbReference>
<dbReference type="RefSeq" id="YP_004889349.1">
    <property type="nucleotide sequence ID" value="NC_004567.2"/>
</dbReference>
<dbReference type="SMR" id="Q88WV4"/>
<dbReference type="STRING" id="220668.lp_1509"/>
<dbReference type="EnsemblBacteria" id="CCC78835">
    <property type="protein sequence ID" value="CCC78835"/>
    <property type="gene ID" value="lp_1509"/>
</dbReference>
<dbReference type="KEGG" id="lpl:lp_1509"/>
<dbReference type="PATRIC" id="fig|220668.9.peg.1269"/>
<dbReference type="eggNOG" id="COG0266">
    <property type="taxonomic scope" value="Bacteria"/>
</dbReference>
<dbReference type="HOGENOM" id="CLU_038423_1_2_9"/>
<dbReference type="OrthoDB" id="9800855at2"/>
<dbReference type="PhylomeDB" id="Q88WV4"/>
<dbReference type="Proteomes" id="UP000000432">
    <property type="component" value="Chromosome"/>
</dbReference>
<dbReference type="GO" id="GO:0034039">
    <property type="term" value="F:8-oxo-7,8-dihydroguanine DNA N-glycosylase activity"/>
    <property type="evidence" value="ECO:0007669"/>
    <property type="project" value="TreeGrafter"/>
</dbReference>
<dbReference type="GO" id="GO:0140078">
    <property type="term" value="F:class I DNA-(apurinic or apyrimidinic site) endonuclease activity"/>
    <property type="evidence" value="ECO:0007669"/>
    <property type="project" value="UniProtKB-EC"/>
</dbReference>
<dbReference type="GO" id="GO:0003684">
    <property type="term" value="F:damaged DNA binding"/>
    <property type="evidence" value="ECO:0007669"/>
    <property type="project" value="InterPro"/>
</dbReference>
<dbReference type="GO" id="GO:0008270">
    <property type="term" value="F:zinc ion binding"/>
    <property type="evidence" value="ECO:0007669"/>
    <property type="project" value="UniProtKB-UniRule"/>
</dbReference>
<dbReference type="GO" id="GO:0006284">
    <property type="term" value="P:base-excision repair"/>
    <property type="evidence" value="ECO:0007669"/>
    <property type="project" value="InterPro"/>
</dbReference>
<dbReference type="CDD" id="cd08966">
    <property type="entry name" value="EcFpg-like_N"/>
    <property type="match status" value="1"/>
</dbReference>
<dbReference type="FunFam" id="1.10.8.50:FF:000003">
    <property type="entry name" value="Formamidopyrimidine-DNA glycosylase"/>
    <property type="match status" value="1"/>
</dbReference>
<dbReference type="FunFam" id="3.20.190.10:FF:000001">
    <property type="entry name" value="Formamidopyrimidine-DNA glycosylase"/>
    <property type="match status" value="1"/>
</dbReference>
<dbReference type="Gene3D" id="1.10.8.50">
    <property type="match status" value="1"/>
</dbReference>
<dbReference type="Gene3D" id="3.20.190.10">
    <property type="entry name" value="MutM-like, N-terminal"/>
    <property type="match status" value="1"/>
</dbReference>
<dbReference type="HAMAP" id="MF_00103">
    <property type="entry name" value="Fapy_DNA_glycosyl"/>
    <property type="match status" value="1"/>
</dbReference>
<dbReference type="InterPro" id="IPR015886">
    <property type="entry name" value="DNA_glyclase/AP_lyase_DNA-bd"/>
</dbReference>
<dbReference type="InterPro" id="IPR020629">
    <property type="entry name" value="Formamido-pyr_DNA_Glyclase"/>
</dbReference>
<dbReference type="InterPro" id="IPR012319">
    <property type="entry name" value="FPG_cat"/>
</dbReference>
<dbReference type="InterPro" id="IPR035937">
    <property type="entry name" value="MutM-like_N-ter"/>
</dbReference>
<dbReference type="InterPro" id="IPR010979">
    <property type="entry name" value="Ribosomal_uS13-like_H2TH"/>
</dbReference>
<dbReference type="InterPro" id="IPR000214">
    <property type="entry name" value="Znf_DNA_glyclase/AP_lyase"/>
</dbReference>
<dbReference type="InterPro" id="IPR010663">
    <property type="entry name" value="Znf_FPG/IleRS"/>
</dbReference>
<dbReference type="NCBIfam" id="TIGR00577">
    <property type="entry name" value="fpg"/>
    <property type="match status" value="1"/>
</dbReference>
<dbReference type="NCBIfam" id="NF002211">
    <property type="entry name" value="PRK01103.1"/>
    <property type="match status" value="1"/>
</dbReference>
<dbReference type="PANTHER" id="PTHR22993">
    <property type="entry name" value="FORMAMIDOPYRIMIDINE-DNA GLYCOSYLASE"/>
    <property type="match status" value="1"/>
</dbReference>
<dbReference type="PANTHER" id="PTHR22993:SF9">
    <property type="entry name" value="FORMAMIDOPYRIMIDINE-DNA GLYCOSYLASE"/>
    <property type="match status" value="1"/>
</dbReference>
<dbReference type="Pfam" id="PF01149">
    <property type="entry name" value="Fapy_DNA_glyco"/>
    <property type="match status" value="1"/>
</dbReference>
<dbReference type="Pfam" id="PF06831">
    <property type="entry name" value="H2TH"/>
    <property type="match status" value="1"/>
</dbReference>
<dbReference type="Pfam" id="PF06827">
    <property type="entry name" value="zf-FPG_IleRS"/>
    <property type="match status" value="1"/>
</dbReference>
<dbReference type="SMART" id="SM00898">
    <property type="entry name" value="Fapy_DNA_glyco"/>
    <property type="match status" value="1"/>
</dbReference>
<dbReference type="SMART" id="SM01232">
    <property type="entry name" value="H2TH"/>
    <property type="match status" value="1"/>
</dbReference>
<dbReference type="SUPFAM" id="SSF57716">
    <property type="entry name" value="Glucocorticoid receptor-like (DNA-binding domain)"/>
    <property type="match status" value="1"/>
</dbReference>
<dbReference type="SUPFAM" id="SSF81624">
    <property type="entry name" value="N-terminal domain of MutM-like DNA repair proteins"/>
    <property type="match status" value="1"/>
</dbReference>
<dbReference type="SUPFAM" id="SSF46946">
    <property type="entry name" value="S13-like H2TH domain"/>
    <property type="match status" value="1"/>
</dbReference>
<dbReference type="PROSITE" id="PS51068">
    <property type="entry name" value="FPG_CAT"/>
    <property type="match status" value="1"/>
</dbReference>
<dbReference type="PROSITE" id="PS51066">
    <property type="entry name" value="ZF_FPG_2"/>
    <property type="match status" value="1"/>
</dbReference>
<gene>
    <name evidence="2" type="primary">mutM</name>
    <name evidence="2" type="synonym">fpg</name>
    <name type="ordered locus">lp_1509</name>
</gene>
<organism>
    <name type="scientific">Lactiplantibacillus plantarum (strain ATCC BAA-793 / NCIMB 8826 / WCFS1)</name>
    <name type="common">Lactobacillus plantarum</name>
    <dbReference type="NCBI Taxonomy" id="220668"/>
    <lineage>
        <taxon>Bacteria</taxon>
        <taxon>Bacillati</taxon>
        <taxon>Bacillota</taxon>
        <taxon>Bacilli</taxon>
        <taxon>Lactobacillales</taxon>
        <taxon>Lactobacillaceae</taxon>
        <taxon>Lactiplantibacillus</taxon>
    </lineage>
</organism>
<keyword id="KW-0227">DNA damage</keyword>
<keyword id="KW-0234">DNA repair</keyword>
<keyword id="KW-0238">DNA-binding</keyword>
<keyword id="KW-0326">Glycosidase</keyword>
<keyword id="KW-0378">Hydrolase</keyword>
<keyword id="KW-0456">Lyase</keyword>
<keyword id="KW-0479">Metal-binding</keyword>
<keyword id="KW-0511">Multifunctional enzyme</keyword>
<keyword id="KW-1185">Reference proteome</keyword>
<keyword id="KW-0862">Zinc</keyword>
<keyword id="KW-0863">Zinc-finger</keyword>
<accession>Q88WV4</accession>
<accession>F9UNP6</accession>
<reference key="1">
    <citation type="journal article" date="2003" name="Proc. Natl. Acad. Sci. U.S.A.">
        <title>Complete genome sequence of Lactobacillus plantarum WCFS1.</title>
        <authorList>
            <person name="Kleerebezem M."/>
            <person name="Boekhorst J."/>
            <person name="van Kranenburg R."/>
            <person name="Molenaar D."/>
            <person name="Kuipers O.P."/>
            <person name="Leer R."/>
            <person name="Tarchini R."/>
            <person name="Peters S.A."/>
            <person name="Sandbrink H.M."/>
            <person name="Fiers M.W.E.J."/>
            <person name="Stiekema W."/>
            <person name="Klein Lankhorst R.M."/>
            <person name="Bron P.A."/>
            <person name="Hoffer S.M."/>
            <person name="Nierop Groot M.N."/>
            <person name="Kerkhoven R."/>
            <person name="De Vries M."/>
            <person name="Ursing B."/>
            <person name="De Vos W.M."/>
            <person name="Siezen R.J."/>
        </authorList>
    </citation>
    <scope>NUCLEOTIDE SEQUENCE [LARGE SCALE GENOMIC DNA]</scope>
    <source>
        <strain>ATCC BAA-793 / NCIMB 8826 / WCFS1</strain>
    </source>
</reference>
<reference key="2">
    <citation type="journal article" date="2012" name="J. Bacteriol.">
        <title>Complete resequencing and reannotation of the Lactobacillus plantarum WCFS1 genome.</title>
        <authorList>
            <person name="Siezen R.J."/>
            <person name="Francke C."/>
            <person name="Renckens B."/>
            <person name="Boekhorst J."/>
            <person name="Wels M."/>
            <person name="Kleerebezem M."/>
            <person name="van Hijum S.A."/>
        </authorList>
    </citation>
    <scope>NUCLEOTIDE SEQUENCE [LARGE SCALE GENOMIC DNA]</scope>
    <scope>GENOME REANNOTATION</scope>
    <source>
        <strain>ATCC BAA-793 / NCIMB 8826 / WCFS1</strain>
    </source>
</reference>
<evidence type="ECO:0000250" key="1"/>
<evidence type="ECO:0000255" key="2">
    <source>
        <dbReference type="HAMAP-Rule" id="MF_00103"/>
    </source>
</evidence>
<name>FPG_LACPL</name>
<proteinExistence type="inferred from homology"/>
<feature type="initiator methionine" description="Removed" evidence="1">
    <location>
        <position position="1"/>
    </location>
</feature>
<feature type="chain" id="PRO_0000170831" description="Formamidopyrimidine-DNA glycosylase">
    <location>
        <begin position="2"/>
        <end position="274"/>
    </location>
</feature>
<feature type="zinc finger region" description="FPG-type; degenerate" evidence="2">
    <location>
        <begin position="239"/>
        <end position="273"/>
    </location>
</feature>
<feature type="active site" description="Schiff-base intermediate with DNA" evidence="2">
    <location>
        <position position="2"/>
    </location>
</feature>
<feature type="active site" description="Proton donor" evidence="2">
    <location>
        <position position="3"/>
    </location>
</feature>
<feature type="active site" description="Proton donor; for beta-elimination activity" evidence="2">
    <location>
        <position position="58"/>
    </location>
</feature>
<feature type="active site" description="Proton donor; for delta-elimination activity" evidence="2">
    <location>
        <position position="263"/>
    </location>
</feature>
<feature type="binding site" evidence="2">
    <location>
        <position position="92"/>
    </location>
    <ligand>
        <name>DNA</name>
        <dbReference type="ChEBI" id="CHEBI:16991"/>
    </ligand>
</feature>
<feature type="binding site" evidence="2">
    <location>
        <position position="111"/>
    </location>
    <ligand>
        <name>DNA</name>
        <dbReference type="ChEBI" id="CHEBI:16991"/>
    </ligand>
</feature>